<reference key="1">
    <citation type="journal article" date="1996" name="Infect. Immun.">
        <title>Characterization of PepB, a group B streptococcal oligopeptidase.</title>
        <authorList>
            <person name="Lin B."/>
            <person name="Averett W.F."/>
            <person name="Novak J."/>
            <person name="Chatham W.W."/>
            <person name="Hollingshead S.K."/>
            <person name="Coligan J.E."/>
            <person name="Egan M.L."/>
            <person name="Pritchard D.G."/>
        </authorList>
    </citation>
    <scope>NUCLEOTIDE SEQUENCE [GENOMIC DNA]</scope>
    <source>
        <strain>3502 / Serotype III</strain>
    </source>
</reference>
<reference key="2">
    <citation type="journal article" date="2002" name="Mol. Microbiol.">
        <title>Genome sequence of Streptococcus agalactiae, a pathogen causing invasive neonatal disease.</title>
        <authorList>
            <person name="Glaser P."/>
            <person name="Rusniok C."/>
            <person name="Buchrieser C."/>
            <person name="Chevalier F."/>
            <person name="Frangeul L."/>
            <person name="Msadek T."/>
            <person name="Zouine M."/>
            <person name="Couve E."/>
            <person name="Lalioui L."/>
            <person name="Poyart C."/>
            <person name="Trieu-Cuot P."/>
            <person name="Kunst F."/>
        </authorList>
    </citation>
    <scope>NUCLEOTIDE SEQUENCE [LARGE SCALE GENOMIC DNA]</scope>
    <source>
        <strain>NEM316</strain>
    </source>
</reference>
<dbReference type="EC" id="3.4.24.-"/>
<dbReference type="EMBL" id="U49821">
    <property type="protein sequence ID" value="AAC44215.1"/>
    <property type="molecule type" value="Genomic_DNA"/>
</dbReference>
<dbReference type="EMBL" id="AL766847">
    <property type="protein sequence ID" value="CAD46468.1"/>
    <property type="molecule type" value="Genomic_DNA"/>
</dbReference>
<dbReference type="PIR" id="T51748">
    <property type="entry name" value="T51748"/>
</dbReference>
<dbReference type="SMR" id="Q53778"/>
<dbReference type="MEROPS" id="M03.007"/>
<dbReference type="KEGG" id="san:pepB"/>
<dbReference type="eggNOG" id="COG1164">
    <property type="taxonomic scope" value="Bacteria"/>
</dbReference>
<dbReference type="HOGENOM" id="CLU_021290_2_0_9"/>
<dbReference type="Proteomes" id="UP000000823">
    <property type="component" value="Chromosome"/>
</dbReference>
<dbReference type="GO" id="GO:0005737">
    <property type="term" value="C:cytoplasm"/>
    <property type="evidence" value="ECO:0007669"/>
    <property type="project" value="UniProtKB-SubCell"/>
</dbReference>
<dbReference type="GO" id="GO:0046872">
    <property type="term" value="F:metal ion binding"/>
    <property type="evidence" value="ECO:0007669"/>
    <property type="project" value="UniProtKB-KW"/>
</dbReference>
<dbReference type="GO" id="GO:0004222">
    <property type="term" value="F:metalloendopeptidase activity"/>
    <property type="evidence" value="ECO:0007669"/>
    <property type="project" value="InterPro"/>
</dbReference>
<dbReference type="GO" id="GO:0006518">
    <property type="term" value="P:peptide metabolic process"/>
    <property type="evidence" value="ECO:0007669"/>
    <property type="project" value="TreeGrafter"/>
</dbReference>
<dbReference type="GO" id="GO:0006508">
    <property type="term" value="P:proteolysis"/>
    <property type="evidence" value="ECO:0007669"/>
    <property type="project" value="UniProtKB-KW"/>
</dbReference>
<dbReference type="CDD" id="cd09608">
    <property type="entry name" value="M3B_PepF"/>
    <property type="match status" value="1"/>
</dbReference>
<dbReference type="Gene3D" id="1.10.1370.20">
    <property type="entry name" value="Oligoendopeptidase f, C-terminal domain"/>
    <property type="match status" value="1"/>
</dbReference>
<dbReference type="Gene3D" id="1.20.140.70">
    <property type="entry name" value="Oligopeptidase f, N-terminal domain"/>
    <property type="match status" value="1"/>
</dbReference>
<dbReference type="Gene3D" id="1.10.287.830">
    <property type="entry name" value="putative peptidase helix hairpin domain like"/>
    <property type="match status" value="1"/>
</dbReference>
<dbReference type="InterPro" id="IPR013647">
    <property type="entry name" value="OligopepF_N_dom"/>
</dbReference>
<dbReference type="InterPro" id="IPR042088">
    <property type="entry name" value="OligoPept_F_C"/>
</dbReference>
<dbReference type="InterPro" id="IPR045090">
    <property type="entry name" value="Pept_M3A_M3B"/>
</dbReference>
<dbReference type="InterPro" id="IPR001567">
    <property type="entry name" value="Pept_M3A_M3B_dom"/>
</dbReference>
<dbReference type="InterPro" id="IPR004438">
    <property type="entry name" value="Peptidase_M3B"/>
</dbReference>
<dbReference type="NCBIfam" id="TIGR00181">
    <property type="entry name" value="pepF"/>
    <property type="match status" value="1"/>
</dbReference>
<dbReference type="PANTHER" id="PTHR11804">
    <property type="entry name" value="PROTEASE M3 THIMET OLIGOPEPTIDASE-RELATED"/>
    <property type="match status" value="1"/>
</dbReference>
<dbReference type="PANTHER" id="PTHR11804:SF84">
    <property type="entry name" value="SACCHAROLYSIN"/>
    <property type="match status" value="1"/>
</dbReference>
<dbReference type="Pfam" id="PF01432">
    <property type="entry name" value="Peptidase_M3"/>
    <property type="match status" value="1"/>
</dbReference>
<dbReference type="Pfam" id="PF08439">
    <property type="entry name" value="Peptidase_M3_N"/>
    <property type="match status" value="1"/>
</dbReference>
<dbReference type="SUPFAM" id="SSF55486">
    <property type="entry name" value="Metalloproteases ('zincins'), catalytic domain"/>
    <property type="match status" value="1"/>
</dbReference>
<comment type="function">
    <text>Has oligopeptidase activity and degrades a variety of small bioactive peptides, including bradykinin, neurotensin, and peptide fragments of substance P and adrenocorticotropin. Also hydrolyzes the synthetic collagen-like substrate N-(3-[2-furyl]acryloyl)-Leu-Gly-Pro-Ala (FALGPA).</text>
</comment>
<comment type="cofactor">
    <cofactor evidence="1">
        <name>Zn(2+)</name>
        <dbReference type="ChEBI" id="CHEBI:29105"/>
    </cofactor>
    <text evidence="1">Binds 1 zinc ion.</text>
</comment>
<comment type="subcellular location">
    <subcellularLocation>
        <location>Cytoplasm</location>
    </subcellularLocation>
</comment>
<comment type="similarity">
    <text evidence="2">Belongs to the peptidase M3B family.</text>
</comment>
<gene>
    <name type="primary">pepB</name>
    <name type="ordered locus">gbs0824</name>
</gene>
<keyword id="KW-0963">Cytoplasm</keyword>
<keyword id="KW-0378">Hydrolase</keyword>
<keyword id="KW-0479">Metal-binding</keyword>
<keyword id="KW-0482">Metalloprotease</keyword>
<keyword id="KW-0645">Protease</keyword>
<keyword id="KW-0862">Zinc</keyword>
<name>PEPB_STRA3</name>
<proteinExistence type="inferred from homology"/>
<protein>
    <recommendedName>
        <fullName>Group B oligopeptidase PepB</fullName>
        <ecNumber>3.4.24.-</ecNumber>
    </recommendedName>
</protein>
<sequence>MSDNRSHIEEKYQWDLTTVFATDELWETEVVELTQAIDNAKGFSGHLLDSSQSLLEITEVELDLSRRLEKVYVYASMKNDQDTTVAKYQEFQAKATALYAKFSETFSFYEPELLQLSESDYQSFLLEMPDLQKYDHFFEKIFANKPHVLSQNEEELLAGASEIFGAAGETFEILDNADMVFPVVKNAKGEEVELTHGNFISLMESSDRTVRKEAYQAMYSTYEQFQHTYAKTLQTNVKSQNFKARVHHYQSARQSALSANFIPEEVYETLIKTVNHHLPLLHRYMKLRQKVLGLDDLKMYDVYTPLSQMDMSFTYDEALKKSEEVLAIFGEVYSERVHRAFTERWIDVHVNKGKRSGAYSGGSYDTNAFMLLNWQDTLDNLYTLVHETGHSLHSTFTRENQPYVYGDYSIFLAEIASTTNENILTETLLKEVKDDKNRFAILNHYLDGFKGTIFRQTQFAEFEHAIHVADQEGQVLTSEYLNNLYAELNEKYYGLTKEDNHFIQYEWARIPHFYYNYYVFQYATGFAAANYLAERIVNGNPEDKEAYLNYLKAGNSDYPLNVIAKAGVDMTSADYLDAAFRVFEERLVELENLVAKGVHND</sequence>
<accession>Q53778</accession>
<organism>
    <name type="scientific">Streptococcus agalactiae serotype III (strain NEM316)</name>
    <dbReference type="NCBI Taxonomy" id="211110"/>
    <lineage>
        <taxon>Bacteria</taxon>
        <taxon>Bacillati</taxon>
        <taxon>Bacillota</taxon>
        <taxon>Bacilli</taxon>
        <taxon>Lactobacillales</taxon>
        <taxon>Streptococcaceae</taxon>
        <taxon>Streptococcus</taxon>
    </lineage>
</organism>
<feature type="chain" id="PRO_0000078170" description="Group B oligopeptidase PepB">
    <location>
        <begin position="1"/>
        <end position="601"/>
    </location>
</feature>
<feature type="active site" evidence="1">
    <location>
        <position position="387"/>
    </location>
</feature>
<feature type="binding site" evidence="1">
    <location>
        <position position="386"/>
    </location>
    <ligand>
        <name>Zn(2+)</name>
        <dbReference type="ChEBI" id="CHEBI:29105"/>
        <note>catalytic</note>
    </ligand>
</feature>
<feature type="binding site" evidence="1">
    <location>
        <position position="390"/>
    </location>
    <ligand>
        <name>Zn(2+)</name>
        <dbReference type="ChEBI" id="CHEBI:29105"/>
        <note>catalytic</note>
    </ligand>
</feature>
<feature type="binding site" evidence="1">
    <location>
        <position position="393"/>
    </location>
    <ligand>
        <name>Zn(2+)</name>
        <dbReference type="ChEBI" id="CHEBI:29105"/>
        <note>catalytic</note>
    </ligand>
</feature>
<feature type="sequence conflict" description="In Ref. 1; AAC44215." evidence="2" ref="1">
    <original>N</original>
    <variation>D</variation>
    <location>
        <position position="39"/>
    </location>
</feature>
<feature type="sequence conflict" description="In Ref. 1; AAC44215." evidence="2" ref="1">
    <original>D</original>
    <variation>E</variation>
    <location>
        <position position="63"/>
    </location>
</feature>
<feature type="sequence conflict" description="In Ref. 1; AAC44215." evidence="2" ref="1">
    <original>V</original>
    <variation>G</variation>
    <location>
        <position position="210"/>
    </location>
</feature>
<feature type="sequence conflict" description="In Ref. 1; AAC44215." evidence="2" ref="1">
    <original>S</original>
    <variation>P</variation>
    <location>
        <position position="307"/>
    </location>
</feature>
<feature type="sequence conflict" description="In Ref. 1; AAC44215." evidence="2" ref="1">
    <original>E</original>
    <variation>K</variation>
    <location>
        <position position="324"/>
    </location>
</feature>
<feature type="sequence conflict" description="In Ref. 1; AAC44215." evidence="2" ref="1">
    <original>V</original>
    <variation>A</variation>
    <location>
        <position position="332"/>
    </location>
</feature>
<feature type="sequence conflict" description="In Ref. 1; AAC44215." evidence="2" ref="1">
    <original>Y</original>
    <variation>H</variation>
    <location>
        <position position="515"/>
    </location>
</feature>
<feature type="sequence conflict" description="In Ref. 1; AAC44215." evidence="2" ref="1">
    <original>A</original>
    <variation>T</variation>
    <location>
        <position position="595"/>
    </location>
</feature>
<evidence type="ECO:0000250" key="1"/>
<evidence type="ECO:0000305" key="2"/>